<keyword id="KW-0378">Hydrolase</keyword>
<keyword id="KW-0479">Metal-binding</keyword>
<keyword id="KW-0659">Purine metabolism</keyword>
<keyword id="KW-1185">Reference proteome</keyword>
<keyword id="KW-0862">Zinc</keyword>
<proteinExistence type="inferred from homology"/>
<evidence type="ECO:0000255" key="1">
    <source>
        <dbReference type="HAMAP-Rule" id="MF_01645"/>
    </source>
</evidence>
<comment type="function">
    <text evidence="1">Catalyzes the conversion of allantoin (5-ureidohydantoin) to allantoic acid by hydrolytic cleavage of the five-member hydantoin ring.</text>
</comment>
<comment type="catalytic activity">
    <reaction evidence="1">
        <text>(S)-allantoin + H2O = allantoate + H(+)</text>
        <dbReference type="Rhea" id="RHEA:17029"/>
        <dbReference type="ChEBI" id="CHEBI:15377"/>
        <dbReference type="ChEBI" id="CHEBI:15378"/>
        <dbReference type="ChEBI" id="CHEBI:15678"/>
        <dbReference type="ChEBI" id="CHEBI:17536"/>
        <dbReference type="EC" id="3.5.2.5"/>
    </reaction>
</comment>
<comment type="cofactor">
    <cofactor evidence="1">
        <name>Zn(2+)</name>
        <dbReference type="ChEBI" id="CHEBI:29105"/>
    </cofactor>
    <text evidence="1">Binds 2 Zn(2+) ions per subunit.</text>
</comment>
<comment type="pathway">
    <text evidence="1">Nitrogen metabolism; (S)-allantoin degradation; allantoate from (S)-allantoin: step 1/1.</text>
</comment>
<comment type="subunit">
    <text evidence="1">Homotetramer.</text>
</comment>
<comment type="PTM">
    <text evidence="1">Carboxylation allows a single lysine to coordinate two zinc ions.</text>
</comment>
<comment type="similarity">
    <text evidence="1">Belongs to the metallo-dependent hydrolases superfamily. Allantoinase family.</text>
</comment>
<name>ALLB_ECO24</name>
<gene>
    <name evidence="1" type="primary">allB</name>
    <name type="ordered locus">EcE24377A_0548</name>
</gene>
<sequence length="453" mass="49602">MSFDLIIKNGTVILENEARVVDIAVKGGKIAAIGQDLGDAKEVMDASGLVVSPGMVDAHTHISEPGRSHWEGYETGTRAAAKGGITTMIEMPLNQLPATVDRASIELKFDAAKGKLTIDAAQLGGLVSYNIDRLHELDEVGVVGFKCFVATCGDRGIDNDFRDVNDWQFFKGAQKLGELGQPVLVHCENALICDALGEEAKREGRVTAHDYVASRPVFTEVEAIRRVLYLAKVAGCRLHVCHISSPEGVEEVTRARQEGQDVTCESCPHYFVLDTDQFEEIGTLAKCSPPIRDLENQKGMWEKLFNGEIDCLVSDHSPCPPEMKAGNIMEAWGGIAGLQNCMDVMFDEAVQKRGMSLPMFGKLMATNAADIFGLQQKGRIALGKDADFVFIQPNSSYVLTNDDLEYRHKVSPYVGRTIGARITKTILRGDVIYDIEQGFPVAPKGQFILKHQQ</sequence>
<protein>
    <recommendedName>
        <fullName evidence="1">Allantoinase</fullName>
        <ecNumber evidence="1">3.5.2.5</ecNumber>
    </recommendedName>
    <alternativeName>
        <fullName evidence="1">Allantoin-utilizing enzyme</fullName>
    </alternativeName>
</protein>
<feature type="chain" id="PRO_0000317676" description="Allantoinase">
    <location>
        <begin position="1"/>
        <end position="453"/>
    </location>
</feature>
<feature type="binding site" evidence="1">
    <location>
        <position position="59"/>
    </location>
    <ligand>
        <name>Zn(2+)</name>
        <dbReference type="ChEBI" id="CHEBI:29105"/>
        <label>1</label>
    </ligand>
</feature>
<feature type="binding site" evidence="1">
    <location>
        <position position="61"/>
    </location>
    <ligand>
        <name>Zn(2+)</name>
        <dbReference type="ChEBI" id="CHEBI:29105"/>
        <label>1</label>
    </ligand>
</feature>
<feature type="binding site" description="via carbamate group" evidence="1">
    <location>
        <position position="146"/>
    </location>
    <ligand>
        <name>Zn(2+)</name>
        <dbReference type="ChEBI" id="CHEBI:29105"/>
        <label>1</label>
    </ligand>
</feature>
<feature type="binding site" description="via carbamate group" evidence="1">
    <location>
        <position position="146"/>
    </location>
    <ligand>
        <name>Zn(2+)</name>
        <dbReference type="ChEBI" id="CHEBI:29105"/>
        <label>2</label>
    </ligand>
</feature>
<feature type="binding site" evidence="1">
    <location>
        <position position="186"/>
    </location>
    <ligand>
        <name>Zn(2+)</name>
        <dbReference type="ChEBI" id="CHEBI:29105"/>
        <label>2</label>
    </ligand>
</feature>
<feature type="binding site" evidence="1">
    <location>
        <position position="242"/>
    </location>
    <ligand>
        <name>Zn(2+)</name>
        <dbReference type="ChEBI" id="CHEBI:29105"/>
        <label>2</label>
    </ligand>
</feature>
<feature type="binding site" evidence="1">
    <location>
        <position position="315"/>
    </location>
    <ligand>
        <name>Zn(2+)</name>
        <dbReference type="ChEBI" id="CHEBI:29105"/>
        <label>1</label>
    </ligand>
</feature>
<feature type="modified residue" description="N6-carboxylysine" evidence="1">
    <location>
        <position position="146"/>
    </location>
</feature>
<reference key="1">
    <citation type="journal article" date="2008" name="J. Bacteriol.">
        <title>The pangenome structure of Escherichia coli: comparative genomic analysis of E. coli commensal and pathogenic isolates.</title>
        <authorList>
            <person name="Rasko D.A."/>
            <person name="Rosovitz M.J."/>
            <person name="Myers G.S.A."/>
            <person name="Mongodin E.F."/>
            <person name="Fricke W.F."/>
            <person name="Gajer P."/>
            <person name="Crabtree J."/>
            <person name="Sebaihia M."/>
            <person name="Thomson N.R."/>
            <person name="Chaudhuri R."/>
            <person name="Henderson I.R."/>
            <person name="Sperandio V."/>
            <person name="Ravel J."/>
        </authorList>
    </citation>
    <scope>NUCLEOTIDE SEQUENCE [LARGE SCALE GENOMIC DNA]</scope>
    <source>
        <strain>E24377A / ETEC</strain>
    </source>
</reference>
<organism>
    <name type="scientific">Escherichia coli O139:H28 (strain E24377A / ETEC)</name>
    <dbReference type="NCBI Taxonomy" id="331111"/>
    <lineage>
        <taxon>Bacteria</taxon>
        <taxon>Pseudomonadati</taxon>
        <taxon>Pseudomonadota</taxon>
        <taxon>Gammaproteobacteria</taxon>
        <taxon>Enterobacterales</taxon>
        <taxon>Enterobacteriaceae</taxon>
        <taxon>Escherichia</taxon>
    </lineage>
</organism>
<dbReference type="EC" id="3.5.2.5" evidence="1"/>
<dbReference type="EMBL" id="CP000800">
    <property type="protein sequence ID" value="ABV17665.1"/>
    <property type="molecule type" value="Genomic_DNA"/>
</dbReference>
<dbReference type="RefSeq" id="WP_000006885.1">
    <property type="nucleotide sequence ID" value="NC_009801.1"/>
</dbReference>
<dbReference type="SMR" id="A7ZIR8"/>
<dbReference type="KEGG" id="ecw:EcE24377A_0548"/>
<dbReference type="HOGENOM" id="CLU_015572_4_2_6"/>
<dbReference type="UniPathway" id="UPA00395">
    <property type="reaction ID" value="UER00653"/>
</dbReference>
<dbReference type="Proteomes" id="UP000001122">
    <property type="component" value="Chromosome"/>
</dbReference>
<dbReference type="GO" id="GO:0005737">
    <property type="term" value="C:cytoplasm"/>
    <property type="evidence" value="ECO:0007669"/>
    <property type="project" value="TreeGrafter"/>
</dbReference>
<dbReference type="GO" id="GO:0004038">
    <property type="term" value="F:allantoinase activity"/>
    <property type="evidence" value="ECO:0007669"/>
    <property type="project" value="UniProtKB-UniRule"/>
</dbReference>
<dbReference type="GO" id="GO:0050897">
    <property type="term" value="F:cobalt ion binding"/>
    <property type="evidence" value="ECO:0007669"/>
    <property type="project" value="InterPro"/>
</dbReference>
<dbReference type="GO" id="GO:0008270">
    <property type="term" value="F:zinc ion binding"/>
    <property type="evidence" value="ECO:0007669"/>
    <property type="project" value="InterPro"/>
</dbReference>
<dbReference type="GO" id="GO:0000256">
    <property type="term" value="P:allantoin catabolic process"/>
    <property type="evidence" value="ECO:0007669"/>
    <property type="project" value="UniProtKB-UniRule"/>
</dbReference>
<dbReference type="GO" id="GO:0006145">
    <property type="term" value="P:purine nucleobase catabolic process"/>
    <property type="evidence" value="ECO:0007669"/>
    <property type="project" value="TreeGrafter"/>
</dbReference>
<dbReference type="CDD" id="cd01315">
    <property type="entry name" value="L-HYD_ALN"/>
    <property type="match status" value="1"/>
</dbReference>
<dbReference type="FunFam" id="3.20.20.140:FF:000013">
    <property type="entry name" value="Allantoinase"/>
    <property type="match status" value="1"/>
</dbReference>
<dbReference type="Gene3D" id="3.20.20.140">
    <property type="entry name" value="Metal-dependent hydrolases"/>
    <property type="match status" value="1"/>
</dbReference>
<dbReference type="Gene3D" id="2.30.40.10">
    <property type="entry name" value="Urease, subunit C, domain 1"/>
    <property type="match status" value="1"/>
</dbReference>
<dbReference type="HAMAP" id="MF_01645">
    <property type="entry name" value="Hydantoinase"/>
    <property type="match status" value="1"/>
</dbReference>
<dbReference type="InterPro" id="IPR017593">
    <property type="entry name" value="Allantoinase"/>
</dbReference>
<dbReference type="InterPro" id="IPR047604">
    <property type="entry name" value="Allantoinase_bact"/>
</dbReference>
<dbReference type="InterPro" id="IPR006680">
    <property type="entry name" value="Amidohydro-rel"/>
</dbReference>
<dbReference type="InterPro" id="IPR050138">
    <property type="entry name" value="DHOase/Allantoinase_Hydrolase"/>
</dbReference>
<dbReference type="InterPro" id="IPR011059">
    <property type="entry name" value="Metal-dep_hydrolase_composite"/>
</dbReference>
<dbReference type="InterPro" id="IPR032466">
    <property type="entry name" value="Metal_Hydrolase"/>
</dbReference>
<dbReference type="NCBIfam" id="TIGR03178">
    <property type="entry name" value="allantoinase"/>
    <property type="match status" value="1"/>
</dbReference>
<dbReference type="NCBIfam" id="NF005960">
    <property type="entry name" value="PRK08044.1"/>
    <property type="match status" value="1"/>
</dbReference>
<dbReference type="PANTHER" id="PTHR43668">
    <property type="entry name" value="ALLANTOINASE"/>
    <property type="match status" value="1"/>
</dbReference>
<dbReference type="PANTHER" id="PTHR43668:SF4">
    <property type="entry name" value="ALLANTOINASE"/>
    <property type="match status" value="1"/>
</dbReference>
<dbReference type="Pfam" id="PF01979">
    <property type="entry name" value="Amidohydro_1"/>
    <property type="match status" value="1"/>
</dbReference>
<dbReference type="SUPFAM" id="SSF51338">
    <property type="entry name" value="Composite domain of metallo-dependent hydrolases"/>
    <property type="match status" value="1"/>
</dbReference>
<dbReference type="SUPFAM" id="SSF51556">
    <property type="entry name" value="Metallo-dependent hydrolases"/>
    <property type="match status" value="1"/>
</dbReference>
<accession>A7ZIR8</accession>